<accession>A5G4G3</accession>
<gene>
    <name evidence="1" type="primary">lepA</name>
    <name type="ordered locus">Gura_2503</name>
</gene>
<reference key="1">
    <citation type="submission" date="2007-05" db="EMBL/GenBank/DDBJ databases">
        <title>Complete sequence of Geobacter uraniireducens Rf4.</title>
        <authorList>
            <consortium name="US DOE Joint Genome Institute"/>
            <person name="Copeland A."/>
            <person name="Lucas S."/>
            <person name="Lapidus A."/>
            <person name="Barry K."/>
            <person name="Detter J.C."/>
            <person name="Glavina del Rio T."/>
            <person name="Hammon N."/>
            <person name="Israni S."/>
            <person name="Dalin E."/>
            <person name="Tice H."/>
            <person name="Pitluck S."/>
            <person name="Chertkov O."/>
            <person name="Brettin T."/>
            <person name="Bruce D."/>
            <person name="Han C."/>
            <person name="Schmutz J."/>
            <person name="Larimer F."/>
            <person name="Land M."/>
            <person name="Hauser L."/>
            <person name="Kyrpides N."/>
            <person name="Mikhailova N."/>
            <person name="Shelobolina E."/>
            <person name="Aklujkar M."/>
            <person name="Lovley D."/>
            <person name="Richardson P."/>
        </authorList>
    </citation>
    <scope>NUCLEOTIDE SEQUENCE [LARGE SCALE GENOMIC DNA]</scope>
    <source>
        <strain>ATCC BAA-1134 / JCM 13001 / Rf4</strain>
    </source>
</reference>
<evidence type="ECO:0000255" key="1">
    <source>
        <dbReference type="HAMAP-Rule" id="MF_00071"/>
    </source>
</evidence>
<protein>
    <recommendedName>
        <fullName evidence="1">Elongation factor 4</fullName>
        <shortName evidence="1">EF-4</shortName>
        <ecNumber evidence="1">3.6.5.n1</ecNumber>
    </recommendedName>
    <alternativeName>
        <fullName evidence="1">Ribosomal back-translocase LepA</fullName>
    </alternativeName>
</protein>
<comment type="function">
    <text evidence="1">Required for accurate and efficient protein synthesis under certain stress conditions. May act as a fidelity factor of the translation reaction, by catalyzing a one-codon backward translocation of tRNAs on improperly translocated ribosomes. Back-translocation proceeds from a post-translocation (POST) complex to a pre-translocation (PRE) complex, thus giving elongation factor G a second chance to translocate the tRNAs correctly. Binds to ribosomes in a GTP-dependent manner.</text>
</comment>
<comment type="catalytic activity">
    <reaction evidence="1">
        <text>GTP + H2O = GDP + phosphate + H(+)</text>
        <dbReference type="Rhea" id="RHEA:19669"/>
        <dbReference type="ChEBI" id="CHEBI:15377"/>
        <dbReference type="ChEBI" id="CHEBI:15378"/>
        <dbReference type="ChEBI" id="CHEBI:37565"/>
        <dbReference type="ChEBI" id="CHEBI:43474"/>
        <dbReference type="ChEBI" id="CHEBI:58189"/>
        <dbReference type="EC" id="3.6.5.n1"/>
    </reaction>
</comment>
<comment type="subcellular location">
    <subcellularLocation>
        <location evidence="1">Cell inner membrane</location>
        <topology evidence="1">Peripheral membrane protein</topology>
        <orientation evidence="1">Cytoplasmic side</orientation>
    </subcellularLocation>
</comment>
<comment type="similarity">
    <text evidence="1">Belongs to the TRAFAC class translation factor GTPase superfamily. Classic translation factor GTPase family. LepA subfamily.</text>
</comment>
<organism>
    <name type="scientific">Geotalea uraniireducens (strain Rf4)</name>
    <name type="common">Geobacter uraniireducens</name>
    <dbReference type="NCBI Taxonomy" id="351605"/>
    <lineage>
        <taxon>Bacteria</taxon>
        <taxon>Pseudomonadati</taxon>
        <taxon>Thermodesulfobacteriota</taxon>
        <taxon>Desulfuromonadia</taxon>
        <taxon>Geobacterales</taxon>
        <taxon>Geobacteraceae</taxon>
        <taxon>Geotalea</taxon>
    </lineage>
</organism>
<feature type="chain" id="PRO_1000075135" description="Elongation factor 4">
    <location>
        <begin position="1"/>
        <end position="599"/>
    </location>
</feature>
<feature type="domain" description="tr-type G">
    <location>
        <begin position="4"/>
        <end position="186"/>
    </location>
</feature>
<feature type="binding site" evidence="1">
    <location>
        <begin position="16"/>
        <end position="21"/>
    </location>
    <ligand>
        <name>GTP</name>
        <dbReference type="ChEBI" id="CHEBI:37565"/>
    </ligand>
</feature>
<feature type="binding site" evidence="1">
    <location>
        <begin position="133"/>
        <end position="136"/>
    </location>
    <ligand>
        <name>GTP</name>
        <dbReference type="ChEBI" id="CHEBI:37565"/>
    </ligand>
</feature>
<keyword id="KW-0997">Cell inner membrane</keyword>
<keyword id="KW-1003">Cell membrane</keyword>
<keyword id="KW-0342">GTP-binding</keyword>
<keyword id="KW-0378">Hydrolase</keyword>
<keyword id="KW-0472">Membrane</keyword>
<keyword id="KW-0547">Nucleotide-binding</keyword>
<keyword id="KW-0648">Protein biosynthesis</keyword>
<keyword id="KW-1185">Reference proteome</keyword>
<dbReference type="EC" id="3.6.5.n1" evidence="1"/>
<dbReference type="EMBL" id="CP000698">
    <property type="protein sequence ID" value="ABQ26681.1"/>
    <property type="molecule type" value="Genomic_DNA"/>
</dbReference>
<dbReference type="RefSeq" id="WP_011939368.1">
    <property type="nucleotide sequence ID" value="NC_009483.1"/>
</dbReference>
<dbReference type="SMR" id="A5G4G3"/>
<dbReference type="STRING" id="351605.Gura_2503"/>
<dbReference type="KEGG" id="gur:Gura_2503"/>
<dbReference type="HOGENOM" id="CLU_009995_3_3_7"/>
<dbReference type="OrthoDB" id="9801591at2"/>
<dbReference type="Proteomes" id="UP000006695">
    <property type="component" value="Chromosome"/>
</dbReference>
<dbReference type="GO" id="GO:0005886">
    <property type="term" value="C:plasma membrane"/>
    <property type="evidence" value="ECO:0007669"/>
    <property type="project" value="UniProtKB-SubCell"/>
</dbReference>
<dbReference type="GO" id="GO:0005525">
    <property type="term" value="F:GTP binding"/>
    <property type="evidence" value="ECO:0007669"/>
    <property type="project" value="UniProtKB-UniRule"/>
</dbReference>
<dbReference type="GO" id="GO:0003924">
    <property type="term" value="F:GTPase activity"/>
    <property type="evidence" value="ECO:0007669"/>
    <property type="project" value="UniProtKB-UniRule"/>
</dbReference>
<dbReference type="GO" id="GO:0043022">
    <property type="term" value="F:ribosome binding"/>
    <property type="evidence" value="ECO:0007669"/>
    <property type="project" value="UniProtKB-UniRule"/>
</dbReference>
<dbReference type="GO" id="GO:0003746">
    <property type="term" value="F:translation elongation factor activity"/>
    <property type="evidence" value="ECO:0007669"/>
    <property type="project" value="UniProtKB-UniRule"/>
</dbReference>
<dbReference type="GO" id="GO:0045727">
    <property type="term" value="P:positive regulation of translation"/>
    <property type="evidence" value="ECO:0007669"/>
    <property type="project" value="UniProtKB-UniRule"/>
</dbReference>
<dbReference type="CDD" id="cd03699">
    <property type="entry name" value="EF4_II"/>
    <property type="match status" value="1"/>
</dbReference>
<dbReference type="CDD" id="cd16260">
    <property type="entry name" value="EF4_III"/>
    <property type="match status" value="1"/>
</dbReference>
<dbReference type="CDD" id="cd01890">
    <property type="entry name" value="LepA"/>
    <property type="match status" value="1"/>
</dbReference>
<dbReference type="CDD" id="cd03709">
    <property type="entry name" value="lepA_C"/>
    <property type="match status" value="1"/>
</dbReference>
<dbReference type="FunFam" id="3.40.50.300:FF:000078">
    <property type="entry name" value="Elongation factor 4"/>
    <property type="match status" value="1"/>
</dbReference>
<dbReference type="FunFam" id="2.40.30.10:FF:000015">
    <property type="entry name" value="Translation factor GUF1, mitochondrial"/>
    <property type="match status" value="1"/>
</dbReference>
<dbReference type="FunFam" id="3.30.70.240:FF:000007">
    <property type="entry name" value="Translation factor GUF1, mitochondrial"/>
    <property type="match status" value="1"/>
</dbReference>
<dbReference type="FunFam" id="3.30.70.2570:FF:000001">
    <property type="entry name" value="Translation factor GUF1, mitochondrial"/>
    <property type="match status" value="1"/>
</dbReference>
<dbReference type="FunFam" id="3.30.70.870:FF:000004">
    <property type="entry name" value="Translation factor GUF1, mitochondrial"/>
    <property type="match status" value="1"/>
</dbReference>
<dbReference type="Gene3D" id="3.30.70.240">
    <property type="match status" value="1"/>
</dbReference>
<dbReference type="Gene3D" id="3.30.70.2570">
    <property type="entry name" value="Elongation factor 4, C-terminal domain"/>
    <property type="match status" value="1"/>
</dbReference>
<dbReference type="Gene3D" id="3.30.70.870">
    <property type="entry name" value="Elongation Factor G (Translational Gtpase), domain 3"/>
    <property type="match status" value="1"/>
</dbReference>
<dbReference type="Gene3D" id="3.40.50.300">
    <property type="entry name" value="P-loop containing nucleotide triphosphate hydrolases"/>
    <property type="match status" value="1"/>
</dbReference>
<dbReference type="Gene3D" id="2.40.30.10">
    <property type="entry name" value="Translation factors"/>
    <property type="match status" value="1"/>
</dbReference>
<dbReference type="HAMAP" id="MF_00071">
    <property type="entry name" value="LepA"/>
    <property type="match status" value="1"/>
</dbReference>
<dbReference type="InterPro" id="IPR006297">
    <property type="entry name" value="EF-4"/>
</dbReference>
<dbReference type="InterPro" id="IPR035647">
    <property type="entry name" value="EFG_III/V"/>
</dbReference>
<dbReference type="InterPro" id="IPR000640">
    <property type="entry name" value="EFG_V-like"/>
</dbReference>
<dbReference type="InterPro" id="IPR004161">
    <property type="entry name" value="EFTu-like_2"/>
</dbReference>
<dbReference type="InterPro" id="IPR031157">
    <property type="entry name" value="G_TR_CS"/>
</dbReference>
<dbReference type="InterPro" id="IPR038363">
    <property type="entry name" value="LepA_C_sf"/>
</dbReference>
<dbReference type="InterPro" id="IPR013842">
    <property type="entry name" value="LepA_CTD"/>
</dbReference>
<dbReference type="InterPro" id="IPR035654">
    <property type="entry name" value="LepA_IV"/>
</dbReference>
<dbReference type="InterPro" id="IPR027417">
    <property type="entry name" value="P-loop_NTPase"/>
</dbReference>
<dbReference type="InterPro" id="IPR005225">
    <property type="entry name" value="Small_GTP-bd"/>
</dbReference>
<dbReference type="InterPro" id="IPR000795">
    <property type="entry name" value="T_Tr_GTP-bd_dom"/>
</dbReference>
<dbReference type="NCBIfam" id="TIGR01393">
    <property type="entry name" value="lepA"/>
    <property type="match status" value="1"/>
</dbReference>
<dbReference type="NCBIfam" id="TIGR00231">
    <property type="entry name" value="small_GTP"/>
    <property type="match status" value="1"/>
</dbReference>
<dbReference type="PANTHER" id="PTHR43512:SF4">
    <property type="entry name" value="TRANSLATION FACTOR GUF1 HOMOLOG, CHLOROPLASTIC"/>
    <property type="match status" value="1"/>
</dbReference>
<dbReference type="PANTHER" id="PTHR43512">
    <property type="entry name" value="TRANSLATION FACTOR GUF1-RELATED"/>
    <property type="match status" value="1"/>
</dbReference>
<dbReference type="Pfam" id="PF00679">
    <property type="entry name" value="EFG_C"/>
    <property type="match status" value="1"/>
</dbReference>
<dbReference type="Pfam" id="PF00009">
    <property type="entry name" value="GTP_EFTU"/>
    <property type="match status" value="1"/>
</dbReference>
<dbReference type="Pfam" id="PF03144">
    <property type="entry name" value="GTP_EFTU_D2"/>
    <property type="match status" value="1"/>
</dbReference>
<dbReference type="Pfam" id="PF06421">
    <property type="entry name" value="LepA_C"/>
    <property type="match status" value="1"/>
</dbReference>
<dbReference type="PRINTS" id="PR00315">
    <property type="entry name" value="ELONGATNFCT"/>
</dbReference>
<dbReference type="SUPFAM" id="SSF54980">
    <property type="entry name" value="EF-G C-terminal domain-like"/>
    <property type="match status" value="2"/>
</dbReference>
<dbReference type="SUPFAM" id="SSF52540">
    <property type="entry name" value="P-loop containing nucleoside triphosphate hydrolases"/>
    <property type="match status" value="1"/>
</dbReference>
<dbReference type="PROSITE" id="PS00301">
    <property type="entry name" value="G_TR_1"/>
    <property type="match status" value="1"/>
</dbReference>
<dbReference type="PROSITE" id="PS51722">
    <property type="entry name" value="G_TR_2"/>
    <property type="match status" value="1"/>
</dbReference>
<proteinExistence type="inferred from homology"/>
<sequence>MVLENIRNFSIIAHIDHGKSTLADRLLEYTGALSEREMQNQFLDKMDLERERGITIKAQAVRLNYRAANGKDYILNLIDTPGHVDFTYEVSRSLSACEGALLVVDASQGVEAQTLANVYLALENDLDVFPVLNKIDLPAADPERVKQEIEDIIGLDAHDAVLASAKEGIGTREILEEIVTKIPPPQGDSNKPLKALLFDSWYDQYQGVIVLVRILDGMVKKGDKIQLMSNRRNYEVLKVGVFSPAMCEVAALSAGEVGFIIAGIKDVQDAKVGDTITSLHNPCDGPLPGFKEVQPMVFSGLYPIDTSQYEQLRDALAKLKLNDSSFSYEPETSLALGFGFRCGFLGLLHMEIIQERLEREFNLDLITTAPTVVYKVHRLDGSIITIESANQLPPVQEIQYVEEPFILASIHVPNEFVGGILALCEEKRGVQREIKYLTPTRVMVIYELPLNEVVLDFYDRLKSITKGYASLDYEHLDYRRSNLERLNIMINGEVVDALSLIIHKDKAYFRGRDLVSKMKELIPRQMFEIAIQAAIGNKVIARETVKAMRKDVLAKCYGGDITRKRKLLEKQKEGKKRMKNVGNVELPQEAFLAILKVEG</sequence>
<name>LEPA_GEOUR</name>